<feature type="chain" id="PRO_0000273967" description="Ubiquitin-like protein FUBI">
    <location>
        <begin position="1"/>
        <end position="74"/>
    </location>
</feature>
<dbReference type="EMBL" id="CR858470">
    <property type="protein sequence ID" value="CAH90698.1"/>
    <property type="status" value="ALT_TERM"/>
    <property type="molecule type" value="mRNA"/>
</dbReference>
<dbReference type="RefSeq" id="NP_001125384.1">
    <property type="nucleotide sequence ID" value="NM_001131912.1"/>
</dbReference>
<dbReference type="BMRB" id="P0C2F1"/>
<dbReference type="SMR" id="P0C2F1"/>
<dbReference type="STRING" id="9601.ENSPPYP00000003561"/>
<dbReference type="GeneID" id="100172289"/>
<dbReference type="KEGG" id="pon:100172289"/>
<dbReference type="CTD" id="2197"/>
<dbReference type="eggNOG" id="KOG0001">
    <property type="taxonomic scope" value="Eukaryota"/>
</dbReference>
<dbReference type="eggNOG" id="KOG0009">
    <property type="taxonomic scope" value="Eukaryota"/>
</dbReference>
<dbReference type="HOGENOM" id="CLU_010412_5_0_1"/>
<dbReference type="InParanoid" id="P0C2F1"/>
<dbReference type="OrthoDB" id="9483332at2759"/>
<dbReference type="TreeFam" id="TF313779"/>
<dbReference type="Proteomes" id="UP000001595">
    <property type="component" value="Unplaced"/>
</dbReference>
<dbReference type="CDD" id="cd01793">
    <property type="entry name" value="Ubl_FUBI"/>
    <property type="match status" value="1"/>
</dbReference>
<dbReference type="FunFam" id="3.10.20.90:FF:000114">
    <property type="entry name" value="40S ribosomal protein S30"/>
    <property type="match status" value="1"/>
</dbReference>
<dbReference type="Gene3D" id="3.10.20.90">
    <property type="entry name" value="Phosphatidylinositol 3-kinase Catalytic Subunit, Chain A, domain 1"/>
    <property type="match status" value="1"/>
</dbReference>
<dbReference type="InterPro" id="IPR039415">
    <property type="entry name" value="FUBI"/>
</dbReference>
<dbReference type="InterPro" id="IPR000626">
    <property type="entry name" value="Ubiquitin-like_dom"/>
</dbReference>
<dbReference type="InterPro" id="IPR029071">
    <property type="entry name" value="Ubiquitin-like_domsf"/>
</dbReference>
<dbReference type="InterPro" id="IPR019954">
    <property type="entry name" value="Ubiquitin_CS"/>
</dbReference>
<dbReference type="InterPro" id="IPR019956">
    <property type="entry name" value="Ubiquitin_dom"/>
</dbReference>
<dbReference type="Pfam" id="PF00240">
    <property type="entry name" value="ubiquitin"/>
    <property type="match status" value="1"/>
</dbReference>
<dbReference type="PRINTS" id="PR00348">
    <property type="entry name" value="UBIQUITIN"/>
</dbReference>
<dbReference type="SMART" id="SM00213">
    <property type="entry name" value="UBQ"/>
    <property type="match status" value="1"/>
</dbReference>
<dbReference type="SUPFAM" id="SSF54236">
    <property type="entry name" value="Ubiquitin-like"/>
    <property type="match status" value="1"/>
</dbReference>
<dbReference type="PROSITE" id="PS00299">
    <property type="entry name" value="UBIQUITIN_1"/>
    <property type="match status" value="1"/>
</dbReference>
<dbReference type="PROSITE" id="PS50053">
    <property type="entry name" value="UBIQUITIN_2"/>
    <property type="match status" value="1"/>
</dbReference>
<name>UBIM_PONAB</name>
<keyword id="KW-1185">Reference proteome</keyword>
<accession>P0C2F1</accession>
<accession>Q5RC12</accession>
<comment type="miscellaneous">
    <text>This protein is synthesized with ribosomal S30 as its C-terminal extension.</text>
</comment>
<comment type="similarity">
    <text evidence="1">Belongs to the ubiquitin family.</text>
</comment>
<organism>
    <name type="scientific">Pongo abelii</name>
    <name type="common">Sumatran orangutan</name>
    <name type="synonym">Pongo pygmaeus abelii</name>
    <dbReference type="NCBI Taxonomy" id="9601"/>
    <lineage>
        <taxon>Eukaryota</taxon>
        <taxon>Metazoa</taxon>
        <taxon>Chordata</taxon>
        <taxon>Craniata</taxon>
        <taxon>Vertebrata</taxon>
        <taxon>Euteleostomi</taxon>
        <taxon>Mammalia</taxon>
        <taxon>Eutheria</taxon>
        <taxon>Euarchontoglires</taxon>
        <taxon>Primates</taxon>
        <taxon>Haplorrhini</taxon>
        <taxon>Catarrhini</taxon>
        <taxon>Hominidae</taxon>
        <taxon>Pongo</taxon>
    </lineage>
</organism>
<reference key="1">
    <citation type="submission" date="2004-11" db="EMBL/GenBank/DDBJ databases">
        <authorList>
            <consortium name="The German cDNA consortium"/>
        </authorList>
    </citation>
    <scope>NUCLEOTIDE SEQUENCE [LARGE SCALE MRNA]</scope>
    <source>
        <tissue>Heart</tissue>
    </source>
</reference>
<protein>
    <recommendedName>
        <fullName>Ubiquitin-like protein FUBI</fullName>
    </recommendedName>
</protein>
<proteinExistence type="inferred from homology"/>
<gene>
    <name type="primary">FAU</name>
</gene>
<sequence>MQLFVRAQKLHTLEVTGQETVAQIKAHVASLEGIAPEDQVVLLAGAPLEDEATLGQCGVEALTTLEVAGRMLGG</sequence>
<evidence type="ECO:0000305" key="1"/>